<keyword id="KW-1185">Reference proteome</keyword>
<organism>
    <name type="scientific">Methanocaldococcus jannaschii (strain ATCC 43067 / DSM 2661 / JAL-1 / JCM 10045 / NBRC 100440)</name>
    <name type="common">Methanococcus jannaschii</name>
    <dbReference type="NCBI Taxonomy" id="243232"/>
    <lineage>
        <taxon>Archaea</taxon>
        <taxon>Methanobacteriati</taxon>
        <taxon>Methanobacteriota</taxon>
        <taxon>Methanomada group</taxon>
        <taxon>Methanococci</taxon>
        <taxon>Methanococcales</taxon>
        <taxon>Methanocaldococcaceae</taxon>
        <taxon>Methanocaldococcus</taxon>
    </lineage>
</organism>
<accession>Q58587</accession>
<proteinExistence type="predicted"/>
<sequence>MMKIGVSTLFFWEYPMVEIFDIFRDIGIKCMEFFPENPDFWDNRFDLDYIADLRKEFLKFDVALHNPHIELNPSSLNPYVREAVIKETLWSIELAKFYRCKLITIHPGKRPTNRSPTDEEYEAFFKYLDRTLEVAINKNITICVENMPERINRIGWSPEEMEWILKRYDELLYMTLDFAHAKEYMEEFLESVIDYIKHTHISGVVNRKDHFPLRKSEIDFSPYIKALLDYGYNGMFNLELDDRRLEKNPVTKEEKIEEVIKDIEFLESII</sequence>
<name>Y1188_METJA</name>
<dbReference type="EMBL" id="L77117">
    <property type="protein sequence ID" value="AAB99192.1"/>
    <property type="molecule type" value="Genomic_DNA"/>
</dbReference>
<dbReference type="PIR" id="B64448">
    <property type="entry name" value="B64448"/>
</dbReference>
<dbReference type="SMR" id="Q58587"/>
<dbReference type="STRING" id="243232.MJ_1188"/>
<dbReference type="PaxDb" id="243232-MJ_1188"/>
<dbReference type="EnsemblBacteria" id="AAB99192">
    <property type="protein sequence ID" value="AAB99192"/>
    <property type="gene ID" value="MJ_1188"/>
</dbReference>
<dbReference type="KEGG" id="mja:MJ_1188"/>
<dbReference type="eggNOG" id="arCOG01897">
    <property type="taxonomic scope" value="Archaea"/>
</dbReference>
<dbReference type="HOGENOM" id="CLU_050006_7_0_2"/>
<dbReference type="InParanoid" id="Q58587"/>
<dbReference type="PhylomeDB" id="Q58587"/>
<dbReference type="Proteomes" id="UP000000805">
    <property type="component" value="Chromosome"/>
</dbReference>
<dbReference type="Gene3D" id="3.20.20.150">
    <property type="entry name" value="Divalent-metal-dependent TIM barrel enzymes"/>
    <property type="match status" value="1"/>
</dbReference>
<dbReference type="InterPro" id="IPR050312">
    <property type="entry name" value="IolE/XylAMocC-like"/>
</dbReference>
<dbReference type="InterPro" id="IPR036237">
    <property type="entry name" value="Xyl_isomerase-like_sf"/>
</dbReference>
<dbReference type="InterPro" id="IPR013022">
    <property type="entry name" value="Xyl_isomerase-like_TIM-brl"/>
</dbReference>
<dbReference type="PANTHER" id="PTHR12110">
    <property type="entry name" value="HYDROXYPYRUVATE ISOMERASE"/>
    <property type="match status" value="1"/>
</dbReference>
<dbReference type="PANTHER" id="PTHR12110:SF21">
    <property type="entry name" value="XYLOSE ISOMERASE-LIKE TIM BARREL DOMAIN-CONTAINING PROTEIN"/>
    <property type="match status" value="1"/>
</dbReference>
<dbReference type="Pfam" id="PF01261">
    <property type="entry name" value="AP_endonuc_2"/>
    <property type="match status" value="1"/>
</dbReference>
<dbReference type="SUPFAM" id="SSF51658">
    <property type="entry name" value="Xylose isomerase-like"/>
    <property type="match status" value="1"/>
</dbReference>
<reference key="1">
    <citation type="journal article" date="1996" name="Science">
        <title>Complete genome sequence of the methanogenic archaeon, Methanococcus jannaschii.</title>
        <authorList>
            <person name="Bult C.J."/>
            <person name="White O."/>
            <person name="Olsen G.J."/>
            <person name="Zhou L."/>
            <person name="Fleischmann R.D."/>
            <person name="Sutton G.G."/>
            <person name="Blake J.A."/>
            <person name="FitzGerald L.M."/>
            <person name="Clayton R.A."/>
            <person name="Gocayne J.D."/>
            <person name="Kerlavage A.R."/>
            <person name="Dougherty B.A."/>
            <person name="Tomb J.-F."/>
            <person name="Adams M.D."/>
            <person name="Reich C.I."/>
            <person name="Overbeek R."/>
            <person name="Kirkness E.F."/>
            <person name="Weinstock K.G."/>
            <person name="Merrick J.M."/>
            <person name="Glodek A."/>
            <person name="Scott J.L."/>
            <person name="Geoghagen N.S.M."/>
            <person name="Weidman J.F."/>
            <person name="Fuhrmann J.L."/>
            <person name="Nguyen D."/>
            <person name="Utterback T.R."/>
            <person name="Kelley J.M."/>
            <person name="Peterson J.D."/>
            <person name="Sadow P.W."/>
            <person name="Hanna M.C."/>
            <person name="Cotton M.D."/>
            <person name="Roberts K.M."/>
            <person name="Hurst M.A."/>
            <person name="Kaine B.P."/>
            <person name="Borodovsky M."/>
            <person name="Klenk H.-P."/>
            <person name="Fraser C.M."/>
            <person name="Smith H.O."/>
            <person name="Woese C.R."/>
            <person name="Venter J.C."/>
        </authorList>
    </citation>
    <scope>NUCLEOTIDE SEQUENCE [LARGE SCALE GENOMIC DNA]</scope>
    <source>
        <strain>ATCC 43067 / DSM 2661 / JAL-1 / JCM 10045 / NBRC 100440</strain>
    </source>
</reference>
<feature type="chain" id="PRO_0000107209" description="Uncharacterized protein MJ1188">
    <location>
        <begin position="1"/>
        <end position="270"/>
    </location>
</feature>
<protein>
    <recommendedName>
        <fullName>Uncharacterized protein MJ1188</fullName>
    </recommendedName>
</protein>
<gene>
    <name type="ordered locus">MJ1188</name>
</gene>